<name>NAPB_AZOBR</name>
<organism>
    <name type="scientific">Azospirillum brasilense</name>
    <dbReference type="NCBI Taxonomy" id="192"/>
    <lineage>
        <taxon>Bacteria</taxon>
        <taxon>Pseudomonadati</taxon>
        <taxon>Pseudomonadota</taxon>
        <taxon>Alphaproteobacteria</taxon>
        <taxon>Rhodospirillales</taxon>
        <taxon>Azospirillaceae</taxon>
        <taxon>Azospirillum</taxon>
    </lineage>
</organism>
<sequence>MKTRIIFAALALAAAMPLLVSGVFAADGAAPAKVPSGPHPITQEIPADPMAKEITDDHKRARNYADQPPLIPHAIRDYQIDLNINKCMTCHDRKNTEGSQAPMISVTHFQDRDGQTLGAVSPRRYFCTQCHVPQTDAQPITGNRFRDIDSILAGGKEGAK</sequence>
<evidence type="ECO:0000250" key="1">
    <source>
        <dbReference type="UniProtKB" id="P44654"/>
    </source>
</evidence>
<evidence type="ECO:0000250" key="2">
    <source>
        <dbReference type="UniProtKB" id="Q56351"/>
    </source>
</evidence>
<evidence type="ECO:0000255" key="3"/>
<evidence type="ECO:0000269" key="4">
    <source>
    </source>
</evidence>
<evidence type="ECO:0000305" key="5"/>
<evidence type="ECO:0000312" key="6">
    <source>
        <dbReference type="EMBL" id="AAL36491.1"/>
    </source>
</evidence>
<comment type="function">
    <text evidence="4">Electron transfer subunit of the periplasmic nitrate reductase complex NapAB. Receives electrons from the membrane-anchored tetraheme c-type NapC protein and transfers these to NapA subunit, thus allowing electron flow between membrane and periplasm. Essential for periplasmic nitrate reduction with nitrate as the terminal electron acceptor.</text>
</comment>
<comment type="subunit">
    <text evidence="2">Component of the periplasmic nitrate reductase NapAB complex composed of NapA and NapB.</text>
</comment>
<comment type="subcellular location">
    <subcellularLocation>
        <location evidence="4">Periplasm</location>
    </subcellularLocation>
</comment>
<comment type="PTM">
    <text evidence="2">Binds 2 heme C groups per subunit.</text>
</comment>
<comment type="similarity">
    <text evidence="3">Belongs to the NapB family.</text>
</comment>
<reference evidence="5 6" key="1">
    <citation type="journal article" date="2001" name="Arch. Microbiol.">
        <title>Identification and characterization of a periplasmic nitrate reductase in Azospirillum brasilense Sp245.</title>
        <authorList>
            <person name="Steenhoudt O."/>
            <person name="Keijers V."/>
            <person name="Okon Y."/>
            <person name="Vanderleyden J."/>
        </authorList>
    </citation>
    <scope>NUCLEOTIDE SEQUENCE [GENOMIC DNA]</scope>
    <scope>FUNCTION</scope>
    <scope>SUBCELLULAR LOCATION</scope>
    <source>
        <strain evidence="6">Sp245</strain>
    </source>
</reference>
<feature type="signal peptide" evidence="3">
    <location>
        <begin position="1"/>
        <end position="25"/>
    </location>
</feature>
<feature type="chain" id="PRO_0000417031" description="Periplasmic nitrate reductase, electron transfer subunit">
    <location>
        <begin position="26"/>
        <end position="160"/>
    </location>
</feature>
<feature type="binding site" description="axial binding residue" evidence="1">
    <location>
        <position position="73"/>
    </location>
    <ligand>
        <name>heme c</name>
        <dbReference type="ChEBI" id="CHEBI:61717"/>
        <label>1</label>
    </ligand>
    <ligandPart>
        <name>Fe</name>
        <dbReference type="ChEBI" id="CHEBI:18248"/>
    </ligandPart>
</feature>
<feature type="binding site" description="covalent" evidence="1">
    <location>
        <position position="87"/>
    </location>
    <ligand>
        <name>heme c</name>
        <dbReference type="ChEBI" id="CHEBI:61717"/>
        <label>1</label>
    </ligand>
</feature>
<feature type="binding site" description="covalent" evidence="1">
    <location>
        <position position="90"/>
    </location>
    <ligand>
        <name>heme c</name>
        <dbReference type="ChEBI" id="CHEBI:61717"/>
        <label>1</label>
    </ligand>
</feature>
<feature type="binding site" description="axial binding residue" evidence="1">
    <location>
        <position position="91"/>
    </location>
    <ligand>
        <name>heme c</name>
        <dbReference type="ChEBI" id="CHEBI:61717"/>
        <label>1</label>
    </ligand>
    <ligandPart>
        <name>Fe</name>
        <dbReference type="ChEBI" id="CHEBI:18248"/>
    </ligandPart>
</feature>
<feature type="binding site" description="axial binding residue" evidence="1">
    <location>
        <position position="108"/>
    </location>
    <ligand>
        <name>heme c</name>
        <dbReference type="ChEBI" id="CHEBI:61717"/>
        <label>2</label>
    </ligand>
    <ligandPart>
        <name>Fe</name>
        <dbReference type="ChEBI" id="CHEBI:18248"/>
    </ligandPart>
</feature>
<feature type="binding site" description="covalent" evidence="1">
    <location>
        <position position="127"/>
    </location>
    <ligand>
        <name>heme c</name>
        <dbReference type="ChEBI" id="CHEBI:61717"/>
        <label>2</label>
    </ligand>
</feature>
<feature type="binding site" description="covalent" evidence="1">
    <location>
        <position position="130"/>
    </location>
    <ligand>
        <name>heme c</name>
        <dbReference type="ChEBI" id="CHEBI:61717"/>
        <label>2</label>
    </ligand>
</feature>
<feature type="binding site" description="axial binding residue" evidence="1">
    <location>
        <position position="131"/>
    </location>
    <ligand>
        <name>heme c</name>
        <dbReference type="ChEBI" id="CHEBI:61717"/>
        <label>2</label>
    </ligand>
    <ligandPart>
        <name>Fe</name>
        <dbReference type="ChEBI" id="CHEBI:18248"/>
    </ligandPart>
</feature>
<protein>
    <recommendedName>
        <fullName>Periplasmic nitrate reductase, electron transfer subunit</fullName>
    </recommendedName>
    <alternativeName>
        <fullName evidence="2">Diheme cytochrome c NapB</fullName>
    </alternativeName>
</protein>
<keyword id="KW-0249">Electron transport</keyword>
<keyword id="KW-0349">Heme</keyword>
<keyword id="KW-0408">Iron</keyword>
<keyword id="KW-0479">Metal-binding</keyword>
<keyword id="KW-0574">Periplasm</keyword>
<keyword id="KW-0732">Signal</keyword>
<keyword id="KW-0813">Transport</keyword>
<proteinExistence type="inferred from homology"/>
<gene>
    <name evidence="6" type="primary">napB</name>
</gene>
<dbReference type="EMBL" id="AF245096">
    <property type="protein sequence ID" value="AAL36491.1"/>
    <property type="molecule type" value="Genomic_DNA"/>
</dbReference>
<dbReference type="SMR" id="Q8VU46"/>
<dbReference type="GO" id="GO:0042597">
    <property type="term" value="C:periplasmic space"/>
    <property type="evidence" value="ECO:0007669"/>
    <property type="project" value="UniProtKB-SubCell"/>
</dbReference>
<dbReference type="GO" id="GO:0046872">
    <property type="term" value="F:metal ion binding"/>
    <property type="evidence" value="ECO:0007669"/>
    <property type="project" value="UniProtKB-KW"/>
</dbReference>
<dbReference type="GO" id="GO:0009061">
    <property type="term" value="P:anaerobic respiration"/>
    <property type="evidence" value="ECO:0007669"/>
    <property type="project" value="InterPro"/>
</dbReference>
<dbReference type="FunFam" id="1.10.1130.10:FF:000001">
    <property type="entry name" value="Periplasmic nitrate reductase, electron transfer subunit"/>
    <property type="match status" value="1"/>
</dbReference>
<dbReference type="Gene3D" id="1.10.1130.10">
    <property type="entry name" value="Flavocytochrome C3, Chain A"/>
    <property type="match status" value="1"/>
</dbReference>
<dbReference type="InterPro" id="IPR036280">
    <property type="entry name" value="Multihaem_cyt_sf"/>
</dbReference>
<dbReference type="InterPro" id="IPR005591">
    <property type="entry name" value="NapB"/>
</dbReference>
<dbReference type="PANTHER" id="PTHR38604">
    <property type="entry name" value="PERIPLASMIC NITRATE REDUCTASE, ELECTRON TRANSFER SUBUNIT"/>
    <property type="match status" value="1"/>
</dbReference>
<dbReference type="PANTHER" id="PTHR38604:SF1">
    <property type="entry name" value="PERIPLASMIC NITRATE REDUCTASE, ELECTRON TRANSFER SUBUNIT"/>
    <property type="match status" value="1"/>
</dbReference>
<dbReference type="Pfam" id="PF03892">
    <property type="entry name" value="NapB"/>
    <property type="match status" value="1"/>
</dbReference>
<dbReference type="PIRSF" id="PIRSF006105">
    <property type="entry name" value="NapB"/>
    <property type="match status" value="1"/>
</dbReference>
<dbReference type="SUPFAM" id="SSF48695">
    <property type="entry name" value="Multiheme cytochromes"/>
    <property type="match status" value="1"/>
</dbReference>
<dbReference type="PROSITE" id="PS51008">
    <property type="entry name" value="MULTIHEME_CYTC"/>
    <property type="match status" value="1"/>
</dbReference>
<accession>Q8VU46</accession>